<proteinExistence type="inferred from homology"/>
<reference key="1">
    <citation type="journal article" date="2006" name="J. Bacteriol.">
        <title>Comparative genomic analysis of three strains of Ehrlichia ruminantium reveals an active process of genome size plasticity.</title>
        <authorList>
            <person name="Frutos R."/>
            <person name="Viari A."/>
            <person name="Ferraz C."/>
            <person name="Morgat A."/>
            <person name="Eychenie S."/>
            <person name="Kandassamy Y."/>
            <person name="Chantal I."/>
            <person name="Bensaid A."/>
            <person name="Coissac E."/>
            <person name="Vachiery N."/>
            <person name="Demaille J."/>
            <person name="Martinez D."/>
        </authorList>
    </citation>
    <scope>NUCLEOTIDE SEQUENCE [LARGE SCALE GENOMIC DNA]</scope>
    <source>
        <strain>Gardel</strain>
    </source>
</reference>
<protein>
    <recommendedName>
        <fullName evidence="1">Ribonuclease HII</fullName>
        <shortName evidence="1">RNase HII</shortName>
        <ecNumber evidence="1">3.1.26.4</ecNumber>
    </recommendedName>
</protein>
<organism>
    <name type="scientific">Ehrlichia ruminantium (strain Gardel)</name>
    <dbReference type="NCBI Taxonomy" id="302409"/>
    <lineage>
        <taxon>Bacteria</taxon>
        <taxon>Pseudomonadati</taxon>
        <taxon>Pseudomonadota</taxon>
        <taxon>Alphaproteobacteria</taxon>
        <taxon>Rickettsiales</taxon>
        <taxon>Anaplasmataceae</taxon>
        <taxon>Ehrlichia</taxon>
    </lineage>
</organism>
<evidence type="ECO:0000255" key="1">
    <source>
        <dbReference type="HAMAP-Rule" id="MF_00052"/>
    </source>
</evidence>
<evidence type="ECO:0000255" key="2">
    <source>
        <dbReference type="PROSITE-ProRule" id="PRU01319"/>
    </source>
</evidence>
<feature type="chain" id="PRO_0000235722" description="Ribonuclease HII">
    <location>
        <begin position="1"/>
        <end position="220"/>
    </location>
</feature>
<feature type="domain" description="RNase H type-2" evidence="2">
    <location>
        <begin position="27"/>
        <end position="220"/>
    </location>
</feature>
<feature type="binding site" evidence="1">
    <location>
        <position position="33"/>
    </location>
    <ligand>
        <name>a divalent metal cation</name>
        <dbReference type="ChEBI" id="CHEBI:60240"/>
    </ligand>
</feature>
<feature type="binding site" evidence="1">
    <location>
        <position position="34"/>
    </location>
    <ligand>
        <name>a divalent metal cation</name>
        <dbReference type="ChEBI" id="CHEBI:60240"/>
    </ligand>
</feature>
<feature type="binding site" evidence="1">
    <location>
        <position position="128"/>
    </location>
    <ligand>
        <name>a divalent metal cation</name>
        <dbReference type="ChEBI" id="CHEBI:60240"/>
    </ligand>
</feature>
<accession>Q5FFD4</accession>
<sequence length="220" mass="25009">MHNYLDNIMPDFSIENEILKLKNNKECIIVGVDEVGYGSLAGPVVSAAVFFPNYNNETTQDINDSKKLTPKTRQKIYNKIITRVKWSIGFAHIFEIDEYNILNATHIAMKRALTGLNAHIDIDYVIIDGNKIPNIPWNAQAIIGGDTISTSIAAASIIAKVTRDRLMETLHIQYPQYNWNKNKGYGTKDHITSLYKYGKTIHHRNTFTPISKISYMFKNS</sequence>
<gene>
    <name evidence="1" type="primary">rnhB</name>
    <name type="ordered locus">ERGA_CDS_01700</name>
</gene>
<dbReference type="EC" id="3.1.26.4" evidence="1"/>
<dbReference type="EMBL" id="CR925677">
    <property type="protein sequence ID" value="CAI27622.1"/>
    <property type="molecule type" value="Genomic_DNA"/>
</dbReference>
<dbReference type="SMR" id="Q5FFD4"/>
<dbReference type="KEGG" id="erg:ERGA_CDS_01700"/>
<dbReference type="HOGENOM" id="CLU_036532_3_2_5"/>
<dbReference type="OrthoDB" id="9803420at2"/>
<dbReference type="Proteomes" id="UP000000533">
    <property type="component" value="Chromosome"/>
</dbReference>
<dbReference type="GO" id="GO:0005737">
    <property type="term" value="C:cytoplasm"/>
    <property type="evidence" value="ECO:0007669"/>
    <property type="project" value="UniProtKB-SubCell"/>
</dbReference>
<dbReference type="GO" id="GO:0032299">
    <property type="term" value="C:ribonuclease H2 complex"/>
    <property type="evidence" value="ECO:0007669"/>
    <property type="project" value="TreeGrafter"/>
</dbReference>
<dbReference type="GO" id="GO:0030145">
    <property type="term" value="F:manganese ion binding"/>
    <property type="evidence" value="ECO:0007669"/>
    <property type="project" value="UniProtKB-UniRule"/>
</dbReference>
<dbReference type="GO" id="GO:0003723">
    <property type="term" value="F:RNA binding"/>
    <property type="evidence" value="ECO:0007669"/>
    <property type="project" value="InterPro"/>
</dbReference>
<dbReference type="GO" id="GO:0004523">
    <property type="term" value="F:RNA-DNA hybrid ribonuclease activity"/>
    <property type="evidence" value="ECO:0007669"/>
    <property type="project" value="UniProtKB-UniRule"/>
</dbReference>
<dbReference type="GO" id="GO:0043137">
    <property type="term" value="P:DNA replication, removal of RNA primer"/>
    <property type="evidence" value="ECO:0007669"/>
    <property type="project" value="TreeGrafter"/>
</dbReference>
<dbReference type="GO" id="GO:0006298">
    <property type="term" value="P:mismatch repair"/>
    <property type="evidence" value="ECO:0007669"/>
    <property type="project" value="TreeGrafter"/>
</dbReference>
<dbReference type="CDD" id="cd07182">
    <property type="entry name" value="RNase_HII_bacteria_HII_like"/>
    <property type="match status" value="1"/>
</dbReference>
<dbReference type="Gene3D" id="3.30.420.10">
    <property type="entry name" value="Ribonuclease H-like superfamily/Ribonuclease H"/>
    <property type="match status" value="1"/>
</dbReference>
<dbReference type="HAMAP" id="MF_00052_B">
    <property type="entry name" value="RNase_HII_B"/>
    <property type="match status" value="1"/>
</dbReference>
<dbReference type="InterPro" id="IPR022898">
    <property type="entry name" value="RNase_HII"/>
</dbReference>
<dbReference type="InterPro" id="IPR001352">
    <property type="entry name" value="RNase_HII/HIII"/>
</dbReference>
<dbReference type="InterPro" id="IPR024567">
    <property type="entry name" value="RNase_HII/HIII_dom"/>
</dbReference>
<dbReference type="InterPro" id="IPR012337">
    <property type="entry name" value="RNaseH-like_sf"/>
</dbReference>
<dbReference type="InterPro" id="IPR036397">
    <property type="entry name" value="RNaseH_sf"/>
</dbReference>
<dbReference type="NCBIfam" id="NF000595">
    <property type="entry name" value="PRK00015.1-3"/>
    <property type="match status" value="1"/>
</dbReference>
<dbReference type="PANTHER" id="PTHR10954">
    <property type="entry name" value="RIBONUCLEASE H2 SUBUNIT A"/>
    <property type="match status" value="1"/>
</dbReference>
<dbReference type="PANTHER" id="PTHR10954:SF18">
    <property type="entry name" value="RIBONUCLEASE HII"/>
    <property type="match status" value="1"/>
</dbReference>
<dbReference type="Pfam" id="PF01351">
    <property type="entry name" value="RNase_HII"/>
    <property type="match status" value="1"/>
</dbReference>
<dbReference type="SUPFAM" id="SSF53098">
    <property type="entry name" value="Ribonuclease H-like"/>
    <property type="match status" value="1"/>
</dbReference>
<dbReference type="PROSITE" id="PS51975">
    <property type="entry name" value="RNASE_H_2"/>
    <property type="match status" value="1"/>
</dbReference>
<comment type="function">
    <text evidence="1">Endonuclease that specifically degrades the RNA of RNA-DNA hybrids.</text>
</comment>
<comment type="catalytic activity">
    <reaction evidence="1">
        <text>Endonucleolytic cleavage to 5'-phosphomonoester.</text>
        <dbReference type="EC" id="3.1.26.4"/>
    </reaction>
</comment>
<comment type="cofactor">
    <cofactor evidence="1">
        <name>Mn(2+)</name>
        <dbReference type="ChEBI" id="CHEBI:29035"/>
    </cofactor>
    <cofactor evidence="1">
        <name>Mg(2+)</name>
        <dbReference type="ChEBI" id="CHEBI:18420"/>
    </cofactor>
    <text evidence="1">Manganese or magnesium. Binds 1 divalent metal ion per monomer in the absence of substrate. May bind a second metal ion after substrate binding.</text>
</comment>
<comment type="subcellular location">
    <subcellularLocation>
        <location evidence="1">Cytoplasm</location>
    </subcellularLocation>
</comment>
<comment type="similarity">
    <text evidence="1">Belongs to the RNase HII family.</text>
</comment>
<name>RNH2_EHRRG</name>
<keyword id="KW-0963">Cytoplasm</keyword>
<keyword id="KW-0255">Endonuclease</keyword>
<keyword id="KW-0378">Hydrolase</keyword>
<keyword id="KW-0464">Manganese</keyword>
<keyword id="KW-0479">Metal-binding</keyword>
<keyword id="KW-0540">Nuclease</keyword>